<evidence type="ECO:0000255" key="1">
    <source>
        <dbReference type="HAMAP-Rule" id="MF_04064"/>
    </source>
</evidence>
<evidence type="ECO:0000256" key="2">
    <source>
        <dbReference type="SAM" id="MobiDB-lite"/>
    </source>
</evidence>
<dbReference type="EMBL" id="CY014685">
    <property type="protein sequence ID" value="ABI84554.1"/>
    <property type="molecule type" value="Genomic_RNA"/>
</dbReference>
<dbReference type="SMR" id="Q0A428"/>
<dbReference type="Proteomes" id="UP000155465">
    <property type="component" value="Genome"/>
</dbReference>
<dbReference type="GO" id="GO:0044164">
    <property type="term" value="C:host cell cytosol"/>
    <property type="evidence" value="ECO:0007669"/>
    <property type="project" value="UniProtKB-SubCell"/>
</dbReference>
<dbReference type="GO" id="GO:0044192">
    <property type="term" value="C:host cell mitochondrial inner membrane"/>
    <property type="evidence" value="ECO:0007669"/>
    <property type="project" value="UniProtKB-SubCell"/>
</dbReference>
<dbReference type="GO" id="GO:0042025">
    <property type="term" value="C:host cell nucleus"/>
    <property type="evidence" value="ECO:0007669"/>
    <property type="project" value="UniProtKB-SubCell"/>
</dbReference>
<dbReference type="GO" id="GO:0016020">
    <property type="term" value="C:membrane"/>
    <property type="evidence" value="ECO:0007669"/>
    <property type="project" value="UniProtKB-UniRule"/>
</dbReference>
<dbReference type="GO" id="GO:0052150">
    <property type="term" value="P:symbiont-mediated perturbation of host apoptosis"/>
    <property type="evidence" value="ECO:0007669"/>
    <property type="project" value="UniProtKB-KW"/>
</dbReference>
<dbReference type="GO" id="GO:0039545">
    <property type="term" value="P:symbiont-mediated suppression of host cytoplasmic pattern recognition receptor signaling pathway via inhibition of MAVS activity"/>
    <property type="evidence" value="ECO:0007669"/>
    <property type="project" value="UniProtKB-KW"/>
</dbReference>
<dbReference type="HAMAP" id="MF_04064">
    <property type="entry name" value="INFV_PB1F2"/>
    <property type="match status" value="1"/>
</dbReference>
<dbReference type="InterPro" id="IPR021045">
    <property type="entry name" value="Flu_proapoptotic_PB1-F2"/>
</dbReference>
<dbReference type="Pfam" id="PF11986">
    <property type="entry name" value="PB1-F2"/>
    <property type="match status" value="1"/>
</dbReference>
<sequence>MEQEQDTPWTQSTGHINIQKKGNGQQTRKPERPNSTQLMDHYLRTMSQVDMHRQTASWKPWPSLKNPTQESLKTRVLKRWKLFNKQGWTS</sequence>
<protein>
    <recommendedName>
        <fullName evidence="1">Protein PB1-F2</fullName>
    </recommendedName>
</protein>
<comment type="function">
    <text evidence="1">Plays an important role in promoting lung pathology in both primary viral infection and secondary bacterial infection. Promotes alteration of mitochondrial morphology, dissipation of mitochondrial membrane potential, and cell death. Alternatively, inhibits the production of interferon in the infected cell at the level of host mitochondrial antiviral signaling MAVS. Its level of expression differs greatly depending on which cell type is infected, in a manner that is independent of the levels of expression of other viral proteins. Monocytic cells are more affected than epithelial cells. Seems to disable virus-infected monocytes or other host innate immune cells. During early stage of infection, predisposes the mitochondria to permeability transition through interaction with host SLC25A6/ANT3 and VDAC1. These proteins participate in the formation of the permeability transition pore complex (PTPC) responsible of the release of mitochondrial products that triggers apoptosis.</text>
</comment>
<comment type="subunit">
    <text evidence="1">Oligomer. Interacts with human SLC25A6/ANT3 and VDAC1. Interacts with host MAVS.</text>
</comment>
<comment type="subcellular location">
    <subcellularLocation>
        <location evidence="1">Host mitochondrion inner membrane</location>
    </subcellularLocation>
    <subcellularLocation>
        <location evidence="1">Host nucleus</location>
    </subcellularLocation>
    <subcellularLocation>
        <location evidence="1">Host cytoplasm</location>
        <location evidence="1">Host cytosol</location>
    </subcellularLocation>
    <text evidence="1">Inner mitochondrial membrane in most cells types. Otherwise is detected in the nucleus and cytosol.</text>
</comment>
<comment type="miscellaneous">
    <text>Is not encoded in all strains, and seems to be dispensable for replication.</text>
</comment>
<comment type="similarity">
    <text evidence="1">Belongs to the influenza viruses PB1-F2 family.</text>
</comment>
<gene>
    <name evidence="1" type="primary">PB1</name>
</gene>
<accession>Q0A428</accession>
<keyword id="KW-0053">Apoptosis</keyword>
<keyword id="KW-1035">Host cytoplasm</keyword>
<keyword id="KW-1043">Host membrane</keyword>
<keyword id="KW-1045">Host mitochondrion</keyword>
<keyword id="KW-1046">Host mitochondrion inner membrane</keyword>
<keyword id="KW-1048">Host nucleus</keyword>
<keyword id="KW-0945">Host-virus interaction</keyword>
<keyword id="KW-1090">Inhibition of host innate immune response by virus</keyword>
<keyword id="KW-1097">Inhibition of host MAVS by virus</keyword>
<keyword id="KW-1113">Inhibition of host RLR pathway by virus</keyword>
<keyword id="KW-0472">Membrane</keyword>
<keyword id="KW-1119">Modulation of host cell apoptosis by virus</keyword>
<keyword id="KW-0899">Viral immunoevasion</keyword>
<proteinExistence type="inferred from homology"/>
<name>PB1F2_I56A2</name>
<organismHost>
    <name type="scientific">Aves</name>
    <dbReference type="NCBI Taxonomy" id="8782"/>
</organismHost>
<reference key="1">
    <citation type="journal article" date="2006" name="Science">
        <title>Large-scale sequence analysis of avian influenza isolates.</title>
        <authorList>
            <person name="Obenauer J.C."/>
            <person name="Denson J."/>
            <person name="Mehta P.K."/>
            <person name="Su X."/>
            <person name="Mukatira S."/>
            <person name="Finkelstein D.B."/>
            <person name="Xu X."/>
            <person name="Wang J."/>
            <person name="Ma J."/>
            <person name="Fan Y."/>
            <person name="Rakestraw K.M."/>
            <person name="Webster R.G."/>
            <person name="Hoffmann E."/>
            <person name="Krauss S."/>
            <person name="Zheng J."/>
            <person name="Zhang Z."/>
            <person name="Naeve C.W."/>
        </authorList>
    </citation>
    <scope>NUCLEOTIDE SEQUENCE [GENOMIC RNA]</scope>
</reference>
<organism>
    <name type="scientific">Influenza A virus (strain A/Duck/England/1/1956 H11N6)</name>
    <dbReference type="NCBI Taxonomy" id="383550"/>
    <lineage>
        <taxon>Viruses</taxon>
        <taxon>Riboviria</taxon>
        <taxon>Orthornavirae</taxon>
        <taxon>Negarnaviricota</taxon>
        <taxon>Polyploviricotina</taxon>
        <taxon>Insthoviricetes</taxon>
        <taxon>Articulavirales</taxon>
        <taxon>Orthomyxoviridae</taxon>
        <taxon>Alphainfluenzavirus</taxon>
        <taxon>Alphainfluenzavirus influenzae</taxon>
        <taxon>Influenza A virus</taxon>
    </lineage>
</organism>
<feature type="chain" id="PRO_0000278707" description="Protein PB1-F2">
    <location>
        <begin position="1"/>
        <end position="90"/>
    </location>
</feature>
<feature type="region of interest" description="Disordered" evidence="2">
    <location>
        <begin position="1"/>
        <end position="36"/>
    </location>
</feature>
<feature type="region of interest" description="Disordered" evidence="2">
    <location>
        <begin position="50"/>
        <end position="70"/>
    </location>
</feature>
<feature type="region of interest" description="Mitochondrial targeting sequence" evidence="1">
    <location>
        <begin position="65"/>
        <end position="87"/>
    </location>
</feature>
<feature type="site" description="Low pathogenicity" evidence="1">
    <location>
        <position position="66"/>
    </location>
</feature>